<evidence type="ECO:0000255" key="1">
    <source>
        <dbReference type="PROSITE-ProRule" id="PRU00099"/>
    </source>
</evidence>
<feature type="chain" id="PRO_0000074130" description="Uncharacterized protein Rv0891c">
    <location>
        <begin position="1"/>
        <end position="285"/>
    </location>
</feature>
<feature type="domain" description="Guanylate cyclase" evidence="1">
    <location>
        <begin position="92"/>
        <end position="199"/>
    </location>
</feature>
<proteinExistence type="inferred from homology"/>
<accession>P9WMV1</accession>
<accession>L0T6R0</accession>
<accession>Q10551</accession>
<sequence>MLFNAVHNSLPPNIDIDHAILRGEDHPPTCAKCVARVRISALGSLDLRYHSLRCYAAPPDVGRCEFVPPRRRVLIANQGLDVSRLPPTGTVTLLLADVEESTHLWQMCPEDMATAIAHLDHTVSEAITNHGGVQPVKRYEGDSFVAAFTRASDAAACALDLQRTSLAPIRLRIGLHTGEVQLRDELYVGPTINRTARLRDLAHGGQVVLSAATGDLVTGRLPADAWLVDLGRHPLRGLPRPEWVMQLCHPDIREKFPPLRTAKSSPTSILPAQFTTFVGRRAQIS</sequence>
<comment type="similarity">
    <text evidence="1">Belongs to the adenylyl cyclase class-4/guanylyl cyclase family.</text>
</comment>
<organism>
    <name type="scientific">Mycobacterium tuberculosis (strain ATCC 25618 / H37Rv)</name>
    <dbReference type="NCBI Taxonomy" id="83332"/>
    <lineage>
        <taxon>Bacteria</taxon>
        <taxon>Bacillati</taxon>
        <taxon>Actinomycetota</taxon>
        <taxon>Actinomycetes</taxon>
        <taxon>Mycobacteriales</taxon>
        <taxon>Mycobacteriaceae</taxon>
        <taxon>Mycobacterium</taxon>
        <taxon>Mycobacterium tuberculosis complex</taxon>
    </lineage>
</organism>
<name>Y891_MYCTU</name>
<reference key="1">
    <citation type="journal article" date="1998" name="Nature">
        <title>Deciphering the biology of Mycobacterium tuberculosis from the complete genome sequence.</title>
        <authorList>
            <person name="Cole S.T."/>
            <person name="Brosch R."/>
            <person name="Parkhill J."/>
            <person name="Garnier T."/>
            <person name="Churcher C.M."/>
            <person name="Harris D.E."/>
            <person name="Gordon S.V."/>
            <person name="Eiglmeier K."/>
            <person name="Gas S."/>
            <person name="Barry C.E. III"/>
            <person name="Tekaia F."/>
            <person name="Badcock K."/>
            <person name="Basham D."/>
            <person name="Brown D."/>
            <person name="Chillingworth T."/>
            <person name="Connor R."/>
            <person name="Davies R.M."/>
            <person name="Devlin K."/>
            <person name="Feltwell T."/>
            <person name="Gentles S."/>
            <person name="Hamlin N."/>
            <person name="Holroyd S."/>
            <person name="Hornsby T."/>
            <person name="Jagels K."/>
            <person name="Krogh A."/>
            <person name="McLean J."/>
            <person name="Moule S."/>
            <person name="Murphy L.D."/>
            <person name="Oliver S."/>
            <person name="Osborne J."/>
            <person name="Quail M.A."/>
            <person name="Rajandream M.A."/>
            <person name="Rogers J."/>
            <person name="Rutter S."/>
            <person name="Seeger K."/>
            <person name="Skelton S."/>
            <person name="Squares S."/>
            <person name="Squares R."/>
            <person name="Sulston J.E."/>
            <person name="Taylor K."/>
            <person name="Whitehead S."/>
            <person name="Barrell B.G."/>
        </authorList>
    </citation>
    <scope>NUCLEOTIDE SEQUENCE [LARGE SCALE GENOMIC DNA]</scope>
    <source>
        <strain>ATCC 25618 / H37Rv</strain>
    </source>
</reference>
<dbReference type="EMBL" id="AL123456">
    <property type="protein sequence ID" value="CCP43639.1"/>
    <property type="molecule type" value="Genomic_DNA"/>
</dbReference>
<dbReference type="PIR" id="H70781">
    <property type="entry name" value="H70781"/>
</dbReference>
<dbReference type="RefSeq" id="NP_215406.1">
    <property type="nucleotide sequence ID" value="NC_000962.3"/>
</dbReference>
<dbReference type="RefSeq" id="WP_010886093.1">
    <property type="nucleotide sequence ID" value="NC_000962.3"/>
</dbReference>
<dbReference type="SMR" id="P9WMV1"/>
<dbReference type="STRING" id="83332.Rv0891c"/>
<dbReference type="PaxDb" id="83332-Rv0891c"/>
<dbReference type="DNASU" id="885493"/>
<dbReference type="GeneID" id="885493"/>
<dbReference type="KEGG" id="mtu:Rv0891c"/>
<dbReference type="KEGG" id="mtv:RVBD_0891c"/>
<dbReference type="TubercuList" id="Rv0891c"/>
<dbReference type="eggNOG" id="COG2114">
    <property type="taxonomic scope" value="Bacteria"/>
</dbReference>
<dbReference type="InParanoid" id="P9WMV1"/>
<dbReference type="OrthoDB" id="4624147at2"/>
<dbReference type="PhylomeDB" id="P9WMV1"/>
<dbReference type="BRENDA" id="4.6.1.1">
    <property type="organism ID" value="3445"/>
</dbReference>
<dbReference type="Proteomes" id="UP000001584">
    <property type="component" value="Chromosome"/>
</dbReference>
<dbReference type="GO" id="GO:0005829">
    <property type="term" value="C:cytosol"/>
    <property type="evidence" value="ECO:0007005"/>
    <property type="project" value="MTBBASE"/>
</dbReference>
<dbReference type="GO" id="GO:0004016">
    <property type="term" value="F:adenylate cyclase activity"/>
    <property type="evidence" value="ECO:0007669"/>
    <property type="project" value="UniProtKB-ARBA"/>
</dbReference>
<dbReference type="GO" id="GO:0009190">
    <property type="term" value="P:cyclic nucleotide biosynthetic process"/>
    <property type="evidence" value="ECO:0007669"/>
    <property type="project" value="InterPro"/>
</dbReference>
<dbReference type="GO" id="GO:0035556">
    <property type="term" value="P:intracellular signal transduction"/>
    <property type="evidence" value="ECO:0007669"/>
    <property type="project" value="InterPro"/>
</dbReference>
<dbReference type="CDD" id="cd07302">
    <property type="entry name" value="CHD"/>
    <property type="match status" value="1"/>
</dbReference>
<dbReference type="FunFam" id="3.30.70.1230:FF:000043">
    <property type="entry name" value="Luxr family transcriptional regulator"/>
    <property type="match status" value="1"/>
</dbReference>
<dbReference type="FunFam" id="3.30.70.1230:FF:000046">
    <property type="entry name" value="Luxr family transcriptional regulator"/>
    <property type="match status" value="1"/>
</dbReference>
<dbReference type="Gene3D" id="3.30.70.1230">
    <property type="entry name" value="Nucleotide cyclase"/>
    <property type="match status" value="2"/>
</dbReference>
<dbReference type="InterPro" id="IPR001054">
    <property type="entry name" value="A/G_cyclase"/>
</dbReference>
<dbReference type="InterPro" id="IPR050697">
    <property type="entry name" value="Adenylyl/Guanylyl_Cyclase_3/4"/>
</dbReference>
<dbReference type="InterPro" id="IPR029787">
    <property type="entry name" value="Nucleotide_cyclase"/>
</dbReference>
<dbReference type="PANTHER" id="PTHR43081:SF1">
    <property type="entry name" value="ADENYLATE CYCLASE, TERMINAL-DIFFERENTIATION SPECIFIC"/>
    <property type="match status" value="1"/>
</dbReference>
<dbReference type="PANTHER" id="PTHR43081">
    <property type="entry name" value="ADENYLATE CYCLASE, TERMINAL-DIFFERENTIATION SPECIFIC-RELATED"/>
    <property type="match status" value="1"/>
</dbReference>
<dbReference type="Pfam" id="PF00211">
    <property type="entry name" value="Guanylate_cyc"/>
    <property type="match status" value="1"/>
</dbReference>
<dbReference type="SMART" id="SM00044">
    <property type="entry name" value="CYCc"/>
    <property type="match status" value="1"/>
</dbReference>
<dbReference type="SUPFAM" id="SSF55073">
    <property type="entry name" value="Nucleotide cyclase"/>
    <property type="match status" value="1"/>
</dbReference>
<dbReference type="PROSITE" id="PS50125">
    <property type="entry name" value="GUANYLATE_CYCLASE_2"/>
    <property type="match status" value="1"/>
</dbReference>
<keyword id="KW-1185">Reference proteome</keyword>
<protein>
    <recommendedName>
        <fullName>Uncharacterized protein Rv0891c</fullName>
    </recommendedName>
</protein>
<gene>
    <name type="ordered locus">Rv0891c</name>
    <name type="ORF">MTCY31.19c</name>
</gene>